<reference key="1">
    <citation type="journal article" date="1996" name="Infect. Immun.">
        <title>Streptococcus salivarius urease: genetic and biochemical characterization and expression in a dental plaque streptococcus.</title>
        <authorList>
            <person name="Chen Y.-Y.M."/>
            <person name="Clancy K.A."/>
            <person name="Burne R.A."/>
        </authorList>
    </citation>
    <scope>NUCLEOTIDE SEQUENCE [GENOMIC DNA]</scope>
    <scope>BIOPHYSICOCHEMICAL PROPERTIES</scope>
    <source>
        <strain>57.I</strain>
    </source>
</reference>
<reference key="2">
    <citation type="journal article" date="2011" name="J. Bacteriol.">
        <title>Complete genome sequence of the ureolytic Streptococcus salivarius strain 57.I.</title>
        <authorList>
            <person name="Geng J."/>
            <person name="Huang S.C."/>
            <person name="Li S."/>
            <person name="Hu S."/>
            <person name="Chen Y.Y."/>
        </authorList>
    </citation>
    <scope>NUCLEOTIDE SEQUENCE [LARGE SCALE GENOMIC DNA]</scope>
    <source>
        <strain>57.I</strain>
    </source>
</reference>
<reference key="3">
    <citation type="journal article" date="1996" name="FEMS Microbiol. Lett.">
        <title>Analysis of Streptococcus salivarius urease expression using continuous chemostat culture.</title>
        <authorList>
            <person name="Chen Y.-Y.M."/>
            <person name="Burne R.A."/>
        </authorList>
    </citation>
    <scope>INDUCTION</scope>
    <source>
        <strain>57.I</strain>
    </source>
</reference>
<reference key="4">
    <citation type="journal article" date="1998" name="J. Bacteriol.">
        <title>Transcriptional regulation of the Streptococcus salivarius 57.I urease operon.</title>
        <authorList>
            <person name="Chen Y.-Y.M."/>
            <person name="Weaver C.A."/>
            <person name="Mendelsohn D.R."/>
            <person name="Burne R.A."/>
        </authorList>
    </citation>
    <scope>INDUCTION</scope>
    <source>
        <strain>57.I</strain>
    </source>
</reference>
<reference key="5">
    <citation type="journal article" date="2000" name="J. Bacteriol.">
        <title>Dual functions of Streptococcus salivarius urease.</title>
        <authorList>
            <person name="Chen Y.-Y.M."/>
            <person name="Weaver C.A."/>
            <person name="Burne R.A."/>
        </authorList>
    </citation>
    <scope>FUNCTION</scope>
    <source>
        <strain>57.I</strain>
    </source>
</reference>
<keyword id="KW-0963">Cytoplasm</keyword>
<keyword id="KW-0378">Hydrolase</keyword>
<protein>
    <recommendedName>
        <fullName evidence="1">Urease subunit beta</fullName>
        <ecNumber evidence="1">3.5.1.5</ecNumber>
    </recommendedName>
    <alternativeName>
        <fullName evidence="1">Urea amidohydrolase subunit beta</fullName>
    </alternativeName>
</protein>
<name>URE2_STRE5</name>
<accession>Q55054</accession>
<accession>F8HGK1</accession>
<proteinExistence type="evidence at protein level"/>
<comment type="function">
    <text evidence="2">Ureolysis may allow urea to be employed as a nitrogen source for growth and produces ammonia which may protect from killing at low pH.</text>
</comment>
<comment type="catalytic activity">
    <reaction evidence="1">
        <text>urea + 2 H2O + H(+) = hydrogencarbonate + 2 NH4(+)</text>
        <dbReference type="Rhea" id="RHEA:20557"/>
        <dbReference type="ChEBI" id="CHEBI:15377"/>
        <dbReference type="ChEBI" id="CHEBI:15378"/>
        <dbReference type="ChEBI" id="CHEBI:16199"/>
        <dbReference type="ChEBI" id="CHEBI:17544"/>
        <dbReference type="ChEBI" id="CHEBI:28938"/>
        <dbReference type="EC" id="3.5.1.5"/>
    </reaction>
</comment>
<comment type="biophysicochemical properties">
    <kinetics>
        <KM evidence="3">3.7 mM for urea (at pH 7.0 and 37 degrees Celsius)</KM>
        <text>Urea concentrations in the oral cavity of humans normally range from 3 mM to 10 mM.</text>
    </kinetics>
    <phDependence>
        <text evidence="3">Optimum pH is 7.0.</text>
    </phDependence>
    <temperatureDependence>
        <text evidence="3">Optimum temperature is 60 degrees Celsius.</text>
    </temperatureDependence>
</comment>
<comment type="pathway">
    <text evidence="1">Nitrogen metabolism; urea degradation; CO(2) and NH(3) from urea (urease route): step 1/1.</text>
</comment>
<comment type="subunit">
    <text evidence="1">Heterotrimer of UreA (gamma), UreB (beta) and UreC (alpha) subunits. Three heterotrimers associate to form the active enzyme.</text>
</comment>
<comment type="subcellular location">
    <subcellularLocation>
        <location evidence="1">Cytoplasm</location>
    </subcellularLocation>
</comment>
<comment type="induction">
    <text evidence="4 5">By low pH and excess glucose.</text>
</comment>
<comment type="similarity">
    <text evidence="1">Belongs to the urease beta subunit family.</text>
</comment>
<organism>
    <name type="scientific">Streptococcus salivarius (strain 57.I)</name>
    <dbReference type="NCBI Taxonomy" id="1046629"/>
    <lineage>
        <taxon>Bacteria</taxon>
        <taxon>Bacillati</taxon>
        <taxon>Bacillota</taxon>
        <taxon>Bacilli</taxon>
        <taxon>Lactobacillales</taxon>
        <taxon>Streptococcaceae</taxon>
        <taxon>Streptococcus</taxon>
    </lineage>
</organism>
<dbReference type="EC" id="3.5.1.5" evidence="1"/>
<dbReference type="EMBL" id="U35248">
    <property type="protein sequence ID" value="AAC43563.1"/>
    <property type="molecule type" value="Genomic_DNA"/>
</dbReference>
<dbReference type="EMBL" id="CP002888">
    <property type="protein sequence ID" value="AEJ54137.1"/>
    <property type="molecule type" value="Genomic_DNA"/>
</dbReference>
<dbReference type="RefSeq" id="WP_002886559.1">
    <property type="nucleotide sequence ID" value="NC_017594.1"/>
</dbReference>
<dbReference type="SMR" id="Q55054"/>
<dbReference type="KEGG" id="stf:Ssal_01901"/>
<dbReference type="PATRIC" id="fig|1046629.4.peg.1687"/>
<dbReference type="eggNOG" id="COG0832">
    <property type="taxonomic scope" value="Bacteria"/>
</dbReference>
<dbReference type="BioCyc" id="MetaCyc:MONOMER-183"/>
<dbReference type="SABIO-RK" id="Q55054"/>
<dbReference type="UniPathway" id="UPA00258">
    <property type="reaction ID" value="UER00370"/>
</dbReference>
<dbReference type="GO" id="GO:0035550">
    <property type="term" value="C:urease complex"/>
    <property type="evidence" value="ECO:0007669"/>
    <property type="project" value="InterPro"/>
</dbReference>
<dbReference type="GO" id="GO:0009039">
    <property type="term" value="F:urease activity"/>
    <property type="evidence" value="ECO:0007669"/>
    <property type="project" value="UniProtKB-UniRule"/>
</dbReference>
<dbReference type="GO" id="GO:0043419">
    <property type="term" value="P:urea catabolic process"/>
    <property type="evidence" value="ECO:0007669"/>
    <property type="project" value="UniProtKB-UniRule"/>
</dbReference>
<dbReference type="CDD" id="cd00407">
    <property type="entry name" value="Urease_beta"/>
    <property type="match status" value="1"/>
</dbReference>
<dbReference type="FunFam" id="2.10.150.10:FF:000001">
    <property type="entry name" value="Urease subunit beta"/>
    <property type="match status" value="1"/>
</dbReference>
<dbReference type="Gene3D" id="2.10.150.10">
    <property type="entry name" value="Urease, beta subunit"/>
    <property type="match status" value="1"/>
</dbReference>
<dbReference type="HAMAP" id="MF_01954">
    <property type="entry name" value="Urease_beta"/>
    <property type="match status" value="1"/>
</dbReference>
<dbReference type="InterPro" id="IPR002019">
    <property type="entry name" value="Urease_beta-like"/>
</dbReference>
<dbReference type="InterPro" id="IPR036461">
    <property type="entry name" value="Urease_betasu_sf"/>
</dbReference>
<dbReference type="InterPro" id="IPR050069">
    <property type="entry name" value="Urease_subunit"/>
</dbReference>
<dbReference type="NCBIfam" id="NF009682">
    <property type="entry name" value="PRK13203.1"/>
    <property type="match status" value="1"/>
</dbReference>
<dbReference type="NCBIfam" id="TIGR00192">
    <property type="entry name" value="urease_beta"/>
    <property type="match status" value="1"/>
</dbReference>
<dbReference type="PANTHER" id="PTHR33569">
    <property type="entry name" value="UREASE"/>
    <property type="match status" value="1"/>
</dbReference>
<dbReference type="PANTHER" id="PTHR33569:SF1">
    <property type="entry name" value="UREASE"/>
    <property type="match status" value="1"/>
</dbReference>
<dbReference type="Pfam" id="PF00699">
    <property type="entry name" value="Urease_beta"/>
    <property type="match status" value="1"/>
</dbReference>
<dbReference type="SUPFAM" id="SSF51278">
    <property type="entry name" value="Urease, beta-subunit"/>
    <property type="match status" value="1"/>
</dbReference>
<gene>
    <name evidence="1" type="primary">ureB</name>
    <name type="ordered locus">Ssal_01901</name>
</gene>
<feature type="chain" id="PRO_0000067596" description="Urease subunit beta">
    <location>
        <begin position="1"/>
        <end position="103"/>
    </location>
</feature>
<feature type="sequence conflict" description="In Ref. 1; AAC43563." evidence="6" ref="1">
    <original>A</original>
    <variation>S</variation>
    <location>
        <position position="48"/>
    </location>
</feature>
<sequence>MIPGEYHVASEPIDYNGGYEAISLEVKNVGDRAAQVGSHYHFYEANEAGLQFDREKARGKRLDIPAGTAIRFEPGETKTVQLIDFGGKRRIFGFNNKVNGFLD</sequence>
<evidence type="ECO:0000255" key="1">
    <source>
        <dbReference type="HAMAP-Rule" id="MF_01954"/>
    </source>
</evidence>
<evidence type="ECO:0000269" key="2">
    <source>
    </source>
</evidence>
<evidence type="ECO:0000269" key="3">
    <source>
    </source>
</evidence>
<evidence type="ECO:0000269" key="4">
    <source>
    </source>
</evidence>
<evidence type="ECO:0000269" key="5">
    <source>
    </source>
</evidence>
<evidence type="ECO:0000305" key="6"/>